<comment type="function">
    <text evidence="1 5">Essential cell division protein that forms a contractile ring structure (Z ring) at the future cell division site. The regulation of the ring assembly controls the timing and the location of cell division. One of the functions of the FtsZ ring is to recruit other cell division proteins to the septum to produce a new cell wall between the dividing cells. Binds GTP and shows GTPase activity.</text>
</comment>
<comment type="subunit">
    <text evidence="1 2 4 5">Homodimer (PubMed:15342249, PubMed:23888039). Polymerizes to form a dynamic ring structure in a strictly GTP-dependent manner. Interacts directly with several other division proteins (By similarity) (PubMed:15342249, PubMed:23888039). Interacts with sepF; the interaction is direct (PubMed:37250168).</text>
</comment>
<comment type="interaction">
    <interactant intactId="EBI-6414519">
        <id>P9WN95</id>
    </interactant>
    <interactant intactId="EBI-6414478">
        <id>P9WP57</id>
        <label>crgA</label>
    </interactant>
    <organismsDiffer>false</organismsDiffer>
    <experiments>5</experiments>
</comment>
<comment type="subcellular location">
    <subcellularLocation>
        <location evidence="1">Cytoplasm</location>
    </subcellularLocation>
    <text evidence="1">Assembles at midcell at the inner surface of the cytoplasmic membrane.</text>
</comment>
<comment type="similarity">
    <text evidence="1">Belongs to the FtsZ family.</text>
</comment>
<comment type="caution">
    <text evidence="7">The article by Sureka et al was retracted by the editors after publication. Concerns were raised regarding the results presented in multiple figure panels. The raw data or replacement panels that were available did not satisfactorily address all the issues, thus questioning the integrity of the data.</text>
</comment>
<organism>
    <name type="scientific">Mycobacterium tuberculosis (strain ATCC 25618 / H37Rv)</name>
    <dbReference type="NCBI Taxonomy" id="83332"/>
    <lineage>
        <taxon>Bacteria</taxon>
        <taxon>Bacillati</taxon>
        <taxon>Actinomycetota</taxon>
        <taxon>Actinomycetes</taxon>
        <taxon>Mycobacteriales</taxon>
        <taxon>Mycobacteriaceae</taxon>
        <taxon>Mycobacterium</taxon>
        <taxon>Mycobacterium tuberculosis complex</taxon>
    </lineage>
</organism>
<feature type="chain" id="PRO_0000114365" description="Cell division protein FtsZ">
    <location>
        <begin position="1"/>
        <end position="379"/>
    </location>
</feature>
<feature type="region of interest" description="Interaction with sepF" evidence="5">
    <location>
        <begin position="363"/>
        <end position="379"/>
    </location>
</feature>
<feature type="binding site" evidence="1 2 4">
    <location>
        <begin position="18"/>
        <end position="22"/>
    </location>
    <ligand>
        <name>GTP</name>
        <dbReference type="ChEBI" id="CHEBI:37565"/>
    </ligand>
</feature>
<feature type="binding site" evidence="1 2 4">
    <location>
        <begin position="105"/>
        <end position="107"/>
    </location>
    <ligand>
        <name>GTP</name>
        <dbReference type="ChEBI" id="CHEBI:37565"/>
    </ligand>
</feature>
<feature type="binding site" evidence="1 2 4">
    <location>
        <position position="136"/>
    </location>
    <ligand>
        <name>GTP</name>
        <dbReference type="ChEBI" id="CHEBI:37565"/>
    </ligand>
</feature>
<feature type="binding site" evidence="1 2 4">
    <location>
        <position position="140"/>
    </location>
    <ligand>
        <name>GTP</name>
        <dbReference type="ChEBI" id="CHEBI:37565"/>
    </ligand>
</feature>
<feature type="binding site" evidence="1 2 4">
    <location>
        <position position="184"/>
    </location>
    <ligand>
        <name>GTP</name>
        <dbReference type="ChEBI" id="CHEBI:37565"/>
    </ligand>
</feature>
<feature type="mutagenesis site" description="Strong decrease in GTPase activity." evidence="5">
    <original>N</original>
    <variation>A</variation>
    <location>
        <position position="22"/>
    </location>
</feature>
<feature type="mutagenesis site" description="Strong decrease in GTPase activity." evidence="4">
    <original>F</original>
    <variation>E</variation>
    <location>
        <position position="135"/>
    </location>
</feature>
<feature type="mutagenesis site" description="Strong decrease in GTPase activity." evidence="4">
    <original>G</original>
    <variation>E</variation>
    <location>
        <position position="137"/>
    </location>
</feature>
<feature type="mutagenesis site" description="Decrease in GTPase activity." evidence="4">
    <original>K</original>
    <variation>A</variation>
    <location>
        <position position="138"/>
    </location>
</feature>
<feature type="mutagenesis site" description="Strong decrease in GTPase activity." evidence="4">
    <original>D</original>
    <variation>A</variation>
    <location>
        <position position="164"/>
    </location>
</feature>
<feature type="mutagenesis site" description="Strong decrease in GTPase activity." evidence="4">
    <original>L</original>
    <variation>E</variation>
    <location>
        <position position="176"/>
    </location>
</feature>
<feature type="mutagenesis site" description="Strong decrease in GTPase activity." evidence="4">
    <original>A</original>
    <variation>E</variation>
    <location>
        <position position="179"/>
    </location>
</feature>
<feature type="mutagenesis site" description="Strong decrease in GTPase activity." evidence="4">
    <original>L</original>
    <variation>E</variation>
    <location>
        <position position="203"/>
    </location>
</feature>
<feature type="mutagenesis site" description="Strong decrease in GTPase activity." evidence="4">
    <original>I</original>
    <variation>E</variation>
    <location>
        <position position="204"/>
    </location>
</feature>
<feature type="mutagenesis site" description="Reduces FtsZ polymerization and GTP hydrolysis. Does not affect the structure or the stability of the unpolymerized FtsZ." evidence="3">
    <original>D</original>
    <variation>G</variation>
    <location>
        <position position="210"/>
    </location>
</feature>
<feature type="mutagenesis site" description="Strong decrease in GTPase activity." evidence="4">
    <original>L</original>
    <variation>E</variation>
    <location>
        <position position="269"/>
    </location>
</feature>
<feature type="mutagenesis site" description="Strong decrease in GTPase activity." evidence="4">
    <original>I</original>
    <variation>E</variation>
    <location>
        <position position="289"/>
    </location>
</feature>
<feature type="mutagenesis site" description="Strong decrease in GTPase activity." evidence="4">
    <original>F</original>
    <variation>E</variation>
    <location>
        <position position="291"/>
    </location>
</feature>
<feature type="strand" evidence="9">
    <location>
        <begin position="11"/>
        <end position="16"/>
    </location>
</feature>
<feature type="helix" evidence="9">
    <location>
        <begin position="17"/>
        <end position="29"/>
    </location>
</feature>
<feature type="strand" evidence="9">
    <location>
        <begin position="34"/>
        <end position="42"/>
    </location>
</feature>
<feature type="helix" evidence="9">
    <location>
        <begin position="44"/>
        <end position="48"/>
    </location>
</feature>
<feature type="strand" evidence="9">
    <location>
        <begin position="53"/>
        <end position="57"/>
    </location>
</feature>
<feature type="turn" evidence="9">
    <location>
        <begin position="60"/>
        <end position="62"/>
    </location>
</feature>
<feature type="strand" evidence="8">
    <location>
        <begin position="64"/>
        <end position="66"/>
    </location>
</feature>
<feature type="helix" evidence="9">
    <location>
        <begin position="72"/>
        <end position="81"/>
    </location>
</feature>
<feature type="helix" evidence="9">
    <location>
        <begin position="83"/>
        <end position="90"/>
    </location>
</feature>
<feature type="strand" evidence="9">
    <location>
        <begin position="94"/>
        <end position="101"/>
    </location>
</feature>
<feature type="helix" evidence="9">
    <location>
        <begin position="106"/>
        <end position="121"/>
    </location>
</feature>
<feature type="strand" evidence="9">
    <location>
        <begin position="124"/>
        <end position="131"/>
    </location>
</feature>
<feature type="helix" evidence="9">
    <location>
        <begin position="134"/>
        <end position="136"/>
    </location>
</feature>
<feature type="helix" evidence="9">
    <location>
        <begin position="138"/>
        <end position="154"/>
    </location>
</feature>
<feature type="strand" evidence="9">
    <location>
        <begin position="156"/>
        <end position="162"/>
    </location>
</feature>
<feature type="helix" evidence="9">
    <location>
        <begin position="163"/>
        <end position="166"/>
    </location>
</feature>
<feature type="strand" evidence="10">
    <location>
        <begin position="169"/>
        <end position="171"/>
    </location>
</feature>
<feature type="helix" evidence="9">
    <location>
        <begin position="176"/>
        <end position="199"/>
    </location>
</feature>
<feature type="helix" evidence="9">
    <location>
        <begin position="208"/>
        <end position="215"/>
    </location>
</feature>
<feature type="strand" evidence="9">
    <location>
        <begin position="219"/>
        <end position="230"/>
    </location>
</feature>
<feature type="helix" evidence="9">
    <location>
        <begin position="233"/>
        <end position="242"/>
    </location>
</feature>
<feature type="helix" evidence="9">
    <location>
        <begin position="245"/>
        <end position="247"/>
    </location>
</feature>
<feature type="helix" evidence="9">
    <location>
        <begin position="251"/>
        <end position="253"/>
    </location>
</feature>
<feature type="strand" evidence="9">
    <location>
        <begin position="255"/>
        <end position="263"/>
    </location>
</feature>
<feature type="helix" evidence="9">
    <location>
        <begin position="269"/>
        <end position="282"/>
    </location>
</feature>
<feature type="strand" evidence="9">
    <location>
        <begin position="288"/>
        <end position="295"/>
    </location>
</feature>
<feature type="helix" evidence="9">
    <location>
        <begin position="297"/>
        <end position="299"/>
    </location>
</feature>
<feature type="strand" evidence="9">
    <location>
        <begin position="302"/>
        <end position="310"/>
    </location>
</feature>
<evidence type="ECO:0000255" key="1">
    <source>
        <dbReference type="HAMAP-Rule" id="MF_00909"/>
    </source>
</evidence>
<evidence type="ECO:0000269" key="2">
    <source>
    </source>
</evidence>
<evidence type="ECO:0000269" key="3">
    <source>
    </source>
</evidence>
<evidence type="ECO:0000269" key="4">
    <source>
    </source>
</evidence>
<evidence type="ECO:0000269" key="5">
    <source>
    </source>
</evidence>
<evidence type="ECO:0000303" key="6">
    <source>
    </source>
</evidence>
<evidence type="ECO:0000305" key="7">
    <source>
    </source>
</evidence>
<evidence type="ECO:0007829" key="8">
    <source>
        <dbReference type="PDB" id="5ZUE"/>
    </source>
</evidence>
<evidence type="ECO:0007829" key="9">
    <source>
        <dbReference type="PDB" id="6Y1U"/>
    </source>
</evidence>
<evidence type="ECO:0007829" key="10">
    <source>
        <dbReference type="PDB" id="6YM9"/>
    </source>
</evidence>
<accession>P9WN95</accession>
<accession>L0TBN4</accession>
<accession>O08378</accession>
<accession>P64170</accession>
<protein>
    <recommendedName>
        <fullName evidence="1">Cell division protein FtsZ</fullName>
    </recommendedName>
</protein>
<keyword id="KW-0002">3D-structure</keyword>
<keyword id="KW-0131">Cell cycle</keyword>
<keyword id="KW-0132">Cell division</keyword>
<keyword id="KW-0963">Cytoplasm</keyword>
<keyword id="KW-0342">GTP-binding</keyword>
<keyword id="KW-0547">Nucleotide-binding</keyword>
<keyword id="KW-1185">Reference proteome</keyword>
<keyword id="KW-0717">Septation</keyword>
<name>FTSZ_MYCTU</name>
<reference key="1">
    <citation type="journal article" date="1998" name="Nature">
        <title>Deciphering the biology of Mycobacterium tuberculosis from the complete genome sequence.</title>
        <authorList>
            <person name="Cole S.T."/>
            <person name="Brosch R."/>
            <person name="Parkhill J."/>
            <person name="Garnier T."/>
            <person name="Churcher C.M."/>
            <person name="Harris D.E."/>
            <person name="Gordon S.V."/>
            <person name="Eiglmeier K."/>
            <person name="Gas S."/>
            <person name="Barry C.E. III"/>
            <person name="Tekaia F."/>
            <person name="Badcock K."/>
            <person name="Basham D."/>
            <person name="Brown D."/>
            <person name="Chillingworth T."/>
            <person name="Connor R."/>
            <person name="Davies R.M."/>
            <person name="Devlin K."/>
            <person name="Feltwell T."/>
            <person name="Gentles S."/>
            <person name="Hamlin N."/>
            <person name="Holroyd S."/>
            <person name="Hornsby T."/>
            <person name="Jagels K."/>
            <person name="Krogh A."/>
            <person name="McLean J."/>
            <person name="Moule S."/>
            <person name="Murphy L.D."/>
            <person name="Oliver S."/>
            <person name="Osborne J."/>
            <person name="Quail M.A."/>
            <person name="Rajandream M.A."/>
            <person name="Rogers J."/>
            <person name="Rutter S."/>
            <person name="Seeger K."/>
            <person name="Skelton S."/>
            <person name="Squares S."/>
            <person name="Squares R."/>
            <person name="Sulston J.E."/>
            <person name="Taylor K."/>
            <person name="Whitehead S."/>
            <person name="Barrell B.G."/>
        </authorList>
    </citation>
    <scope>NUCLEOTIDE SEQUENCE [LARGE SCALE GENOMIC DNA]</scope>
    <source>
        <strain>ATCC 25618 / H37Rv</strain>
    </source>
</reference>
<reference key="2">
    <citation type="journal article" date="2010" name="PLoS ONE">
        <title>Novel role of phosphorylation-dependent interaction between FtsZ and FipA in mycobacterial cell division.</title>
        <authorList>
            <person name="Sureka K."/>
            <person name="Hossain T."/>
            <person name="Mukherjee P."/>
            <person name="Chatterjee P."/>
            <person name="Datta P."/>
            <person name="Kundu M."/>
            <person name="Basu J."/>
        </authorList>
    </citation>
    <scope>RETRACTED PAPER</scope>
    <source>
        <strain>ATCC 25618 / H37Rv</strain>
    </source>
</reference>
<reference key="3">
    <citation type="journal article" date="2022" name="PLoS ONE">
        <authorList>
            <consortium name="PLOS ONE Editors"/>
        </authorList>
    </citation>
    <scope>RETRACTION NOTICE OF PUBMED:20066037</scope>
</reference>
<reference key="4">
    <citation type="journal article" date="2011" name="Mol. Cell. Proteomics">
        <title>Proteogenomic analysis of Mycobacterium tuberculosis by high resolution mass spectrometry.</title>
        <authorList>
            <person name="Kelkar D.S."/>
            <person name="Kumar D."/>
            <person name="Kumar P."/>
            <person name="Balakrishnan L."/>
            <person name="Muthusamy B."/>
            <person name="Yadav A.K."/>
            <person name="Shrivastava P."/>
            <person name="Marimuthu A."/>
            <person name="Anand S."/>
            <person name="Sundaram H."/>
            <person name="Kingsbury R."/>
            <person name="Harsha H.C."/>
            <person name="Nair B."/>
            <person name="Prasad T.S."/>
            <person name="Chauhan D.S."/>
            <person name="Katoch K."/>
            <person name="Katoch V.M."/>
            <person name="Kumar P."/>
            <person name="Chaerkady R."/>
            <person name="Ramachandran S."/>
            <person name="Dash D."/>
            <person name="Pandey A."/>
        </authorList>
    </citation>
    <scope>IDENTIFICATION BY MASS SPECTROMETRY [LARGE SCALE ANALYSIS]</scope>
    <source>
        <strain>ATCC 25618 / H37Rv</strain>
    </source>
</reference>
<reference key="5">
    <citation type="journal article" date="2023" name="Acta Pharm. Sin. B (APSB)">
        <title>Identification of anti-Mycobacterium tuberculosis agents targeting the interaction of bacterial division proteins FtsZ and SepF.</title>
        <authorList>
            <person name="Zhang H."/>
            <person name="Chen Y."/>
            <person name="Zhang Y."/>
            <person name="Qiao L."/>
            <person name="Chi X."/>
            <person name="Han Y."/>
            <person name="Lin Y."/>
            <person name="Si S."/>
            <person name="Jiang J."/>
        </authorList>
    </citation>
    <scope>FUNCTION</scope>
    <scope>INTERACTION WITH SEPF</scope>
    <scope>MUTAGENESIS OF ASN-22</scope>
    <source>
        <strain evidence="6">ATCC 25618 / H37Rv</strain>
    </source>
</reference>
<reference key="6">
    <citation type="journal article" date="2023" name="Acta Pharm. Sin. B (APSB)">
        <authorList>
            <person name="Zhang H."/>
            <person name="Chen Y."/>
            <person name="Zhang Y."/>
            <person name="Qiao L."/>
            <person name="Chi X."/>
            <person name="Han Y."/>
            <person name="Lin Y."/>
            <person name="Si S."/>
            <person name="Jiang J."/>
        </authorList>
    </citation>
    <scope>ERRATUM OF PUBMED:37250168</scope>
</reference>
<reference key="7">
    <citation type="journal article" date="2004" name="J. Mol. Biol.">
        <title>Structure of Mycobacterium tuberculosis FtsZ reveals unexpected, G protein-like conformational switches.</title>
        <authorList>
            <person name="Leung A.K."/>
            <person name="Lucile White E."/>
            <person name="Ross L.J."/>
            <person name="Reynolds R.C."/>
            <person name="DeVito J.A."/>
            <person name="Borhani D.W."/>
        </authorList>
    </citation>
    <scope>X-RAY CRYSTALLOGRAPHY (1.86 ANGSTROMS) IN COMPLEX WITH GDP</scope>
    <scope>SUBUNIT</scope>
</reference>
<reference key="8">
    <citation type="journal article" date="2008" name="Tuberculosis">
        <title>Characterizing septum inhibition in Mycobacterium tuberculosis for novel drug discovery.</title>
        <authorList>
            <person name="Respicio L."/>
            <person name="Nair P.A."/>
            <person name="Huang Q."/>
            <person name="Anil B."/>
            <person name="Tracz S."/>
            <person name="Truglio J.J."/>
            <person name="Kisker C."/>
            <person name="Raleigh D.P."/>
            <person name="Ojima I."/>
            <person name="Knudson D.L."/>
            <person name="Tonge P.J."/>
            <person name="Slayden R.A."/>
        </authorList>
    </citation>
    <scope>X-RAY CRYSTALLOGRAPHY (2.30 ANGSTROMS) IN COMPLEX WITH GTP ANALOG</scope>
    <scope>GTPASE ACTIVITY</scope>
    <scope>MUTAGENESIS OF ASP-210</scope>
    <source>
        <strain>ATCC 25618 / H37Rv</strain>
    </source>
</reference>
<reference key="9">
    <citation type="journal article" date="2013" name="Science">
        <title>FtsZ protofilaments use a hinge-opening mechanism for constrictive force generation.</title>
        <authorList>
            <person name="Li Y."/>
            <person name="Hsin J."/>
            <person name="Zhao L."/>
            <person name="Cheng Y."/>
            <person name="Shang W."/>
            <person name="Huang K.C."/>
            <person name="Wang H.W."/>
            <person name="Ye S."/>
        </authorList>
    </citation>
    <scope>X-RAY CRYSTALLOGRAPHY (2.91 ANGSTROMS) IN COMPLEX WITH GDP</scope>
    <scope>SUBUNIT</scope>
    <scope>MUTAGENESIS OF PHE-135; GLY-137; LYS-138; ASP-164; LEU-176; ALA-179; LEU-203; ILE-204; LEU-269; ILE-289 AND PHE-291</scope>
</reference>
<sequence length="379" mass="38756">MTPPHNYLAVIKVVGIGGGGVNAVNRMIEQGLKGVEFIAINTDAQALLMSDADVKLDVGRDSTRGLGAGADPEVGRKAAEDAKDEIEELLRGADMVFVTAGEGGGTGTGGAPVVASIARKLGALTVGVVTRPFSFEGKRRSNQAENGIAALRESCDTLIVIPNDRLLQMGDAAVSLMDAFRSADEVLLNGVQGITDLITTPGLINVDFADVKGIMSGAGTALMGIGSARGEGRSLKAAEIAINSPLLEASMEGAQGVLMSIAGGSDLGLFEINEAASLVQDAAHPDANIIFGTVIDDSLGDEVRVTVIAAGFDVSGPGRKPVMGETGGAHRIESAKAGKLTSTLFEPVDAVSVPLHTNGATLSIGGDDDDVDVPPFMRR</sequence>
<dbReference type="EMBL" id="AL123456">
    <property type="protein sequence ID" value="CCP44926.1"/>
    <property type="molecule type" value="Genomic_DNA"/>
</dbReference>
<dbReference type="PIR" id="B70579">
    <property type="entry name" value="B70579"/>
</dbReference>
<dbReference type="RefSeq" id="NP_216666.1">
    <property type="nucleotide sequence ID" value="NC_000962.3"/>
</dbReference>
<dbReference type="RefSeq" id="WP_003411144.1">
    <property type="nucleotide sequence ID" value="NZ_NVQJ01000044.1"/>
</dbReference>
<dbReference type="PDB" id="1RLU">
    <property type="method" value="X-ray"/>
    <property type="resolution" value="2.08 A"/>
    <property type="chains" value="A/B=1-379"/>
</dbReference>
<dbReference type="PDB" id="1RQ2">
    <property type="method" value="X-ray"/>
    <property type="resolution" value="1.86 A"/>
    <property type="chains" value="A/B=1-379"/>
</dbReference>
<dbReference type="PDB" id="1RQ7">
    <property type="method" value="X-ray"/>
    <property type="resolution" value="2.60 A"/>
    <property type="chains" value="A/B=1-379"/>
</dbReference>
<dbReference type="PDB" id="2Q1X">
    <property type="method" value="X-ray"/>
    <property type="resolution" value="2.35 A"/>
    <property type="chains" value="A/B=1-379"/>
</dbReference>
<dbReference type="PDB" id="2Q1Y">
    <property type="method" value="X-ray"/>
    <property type="resolution" value="2.30 A"/>
    <property type="chains" value="A/B=1-379"/>
</dbReference>
<dbReference type="PDB" id="4KWE">
    <property type="method" value="X-ray"/>
    <property type="resolution" value="2.91 A"/>
    <property type="chains" value="A/B/C=1-379"/>
</dbReference>
<dbReference type="PDB" id="5V68">
    <property type="method" value="X-ray"/>
    <property type="resolution" value="3.46 A"/>
    <property type="chains" value="A/B/C/D/E/F=1-379"/>
</dbReference>
<dbReference type="PDB" id="5ZUE">
    <property type="method" value="X-ray"/>
    <property type="resolution" value="2.70 A"/>
    <property type="chains" value="A=1-379"/>
</dbReference>
<dbReference type="PDB" id="6Y1U">
    <property type="method" value="X-ray"/>
    <property type="resolution" value="1.68 A"/>
    <property type="chains" value="A/B=1-314"/>
</dbReference>
<dbReference type="PDB" id="6Y1V">
    <property type="method" value="X-ray"/>
    <property type="resolution" value="2.40 A"/>
    <property type="chains" value="A/B=1-314"/>
</dbReference>
<dbReference type="PDB" id="6YM1">
    <property type="method" value="X-ray"/>
    <property type="resolution" value="1.70 A"/>
    <property type="chains" value="A/B=1-313"/>
</dbReference>
<dbReference type="PDB" id="6YM9">
    <property type="method" value="X-ray"/>
    <property type="resolution" value="2.03 A"/>
    <property type="chains" value="A/B=1-315"/>
</dbReference>
<dbReference type="PDBsum" id="1RLU"/>
<dbReference type="PDBsum" id="1RQ2"/>
<dbReference type="PDBsum" id="1RQ7"/>
<dbReference type="PDBsum" id="2Q1X"/>
<dbReference type="PDBsum" id="2Q1Y"/>
<dbReference type="PDBsum" id="4KWE"/>
<dbReference type="PDBsum" id="5V68"/>
<dbReference type="PDBsum" id="5ZUE"/>
<dbReference type="PDBsum" id="6Y1U"/>
<dbReference type="PDBsum" id="6Y1V"/>
<dbReference type="PDBsum" id="6YM1"/>
<dbReference type="PDBsum" id="6YM9"/>
<dbReference type="SMR" id="P9WN95"/>
<dbReference type="FunCoup" id="P9WN95">
    <property type="interactions" value="265"/>
</dbReference>
<dbReference type="IntAct" id="P9WN95">
    <property type="interactions" value="1"/>
</dbReference>
<dbReference type="STRING" id="83332.Rv2150c"/>
<dbReference type="BindingDB" id="P9WN95"/>
<dbReference type="ChEMBL" id="CHEMBL4213"/>
<dbReference type="DrugBank" id="DB01864">
    <property type="generic name" value="5'-Guanosine-Diphosphate-Monothiophosphate"/>
</dbReference>
<dbReference type="DrugBank" id="DB04315">
    <property type="generic name" value="Guanosine-5'-Diphosphate"/>
</dbReference>
<dbReference type="PaxDb" id="83332-Rv2150c"/>
<dbReference type="DNASU" id="888369"/>
<dbReference type="GeneID" id="45426128"/>
<dbReference type="GeneID" id="888369"/>
<dbReference type="KEGG" id="mtu:Rv2150c"/>
<dbReference type="KEGG" id="mtv:RVBD_2150c"/>
<dbReference type="TubercuList" id="Rv2150c"/>
<dbReference type="eggNOG" id="COG0206">
    <property type="taxonomic scope" value="Bacteria"/>
</dbReference>
<dbReference type="InParanoid" id="P9WN95"/>
<dbReference type="OrthoDB" id="9813375at2"/>
<dbReference type="PhylomeDB" id="P9WN95"/>
<dbReference type="EvolutionaryTrace" id="P9WN95"/>
<dbReference type="Proteomes" id="UP000001584">
    <property type="component" value="Chromosome"/>
</dbReference>
<dbReference type="GO" id="GO:0032153">
    <property type="term" value="C:cell division site"/>
    <property type="evidence" value="ECO:0000318"/>
    <property type="project" value="GO_Central"/>
</dbReference>
<dbReference type="GO" id="GO:0005737">
    <property type="term" value="C:cytoplasm"/>
    <property type="evidence" value="ECO:0000318"/>
    <property type="project" value="GO_Central"/>
</dbReference>
<dbReference type="GO" id="GO:0005886">
    <property type="term" value="C:plasma membrane"/>
    <property type="evidence" value="ECO:0007005"/>
    <property type="project" value="MTBBASE"/>
</dbReference>
<dbReference type="GO" id="GO:0005525">
    <property type="term" value="F:GTP binding"/>
    <property type="evidence" value="ECO:0000318"/>
    <property type="project" value="GO_Central"/>
</dbReference>
<dbReference type="GO" id="GO:0003924">
    <property type="term" value="F:GTPase activity"/>
    <property type="evidence" value="ECO:0000314"/>
    <property type="project" value="MTBBASE"/>
</dbReference>
<dbReference type="GO" id="GO:0000287">
    <property type="term" value="F:magnesium ion binding"/>
    <property type="evidence" value="ECO:0000314"/>
    <property type="project" value="MTBBASE"/>
</dbReference>
<dbReference type="GO" id="GO:0051301">
    <property type="term" value="P:cell division"/>
    <property type="evidence" value="ECO:0000318"/>
    <property type="project" value="GO_Central"/>
</dbReference>
<dbReference type="GO" id="GO:0000917">
    <property type="term" value="P:division septum assembly"/>
    <property type="evidence" value="ECO:0007669"/>
    <property type="project" value="UniProtKB-KW"/>
</dbReference>
<dbReference type="GO" id="GO:0043093">
    <property type="term" value="P:FtsZ-dependent cytokinesis"/>
    <property type="evidence" value="ECO:0007669"/>
    <property type="project" value="UniProtKB-UniRule"/>
</dbReference>
<dbReference type="GO" id="GO:0045787">
    <property type="term" value="P:positive regulation of cell cycle"/>
    <property type="evidence" value="ECO:0000315"/>
    <property type="project" value="MTBBASE"/>
</dbReference>
<dbReference type="GO" id="GO:0051258">
    <property type="term" value="P:protein polymerization"/>
    <property type="evidence" value="ECO:0000314"/>
    <property type="project" value="MTBBASE"/>
</dbReference>
<dbReference type="GO" id="GO:0000921">
    <property type="term" value="P:septin ring assembly"/>
    <property type="evidence" value="ECO:0000315"/>
    <property type="project" value="MTBBASE"/>
</dbReference>
<dbReference type="CDD" id="cd02201">
    <property type="entry name" value="FtsZ_type1"/>
    <property type="match status" value="1"/>
</dbReference>
<dbReference type="FunFam" id="3.30.1330.20:FF:000005">
    <property type="entry name" value="Cell division protein FtsZ"/>
    <property type="match status" value="1"/>
</dbReference>
<dbReference type="FunFam" id="3.40.50.1440:FF:000001">
    <property type="entry name" value="Cell division protein FtsZ"/>
    <property type="match status" value="1"/>
</dbReference>
<dbReference type="Gene3D" id="3.30.1330.20">
    <property type="entry name" value="Tubulin/FtsZ, C-terminal domain"/>
    <property type="match status" value="1"/>
</dbReference>
<dbReference type="Gene3D" id="3.40.50.1440">
    <property type="entry name" value="Tubulin/FtsZ, GTPase domain"/>
    <property type="match status" value="1"/>
</dbReference>
<dbReference type="HAMAP" id="MF_00909">
    <property type="entry name" value="FtsZ"/>
    <property type="match status" value="1"/>
</dbReference>
<dbReference type="InterPro" id="IPR000158">
    <property type="entry name" value="Cell_div_FtsZ"/>
</dbReference>
<dbReference type="InterPro" id="IPR020805">
    <property type="entry name" value="Cell_div_FtsZ_CS"/>
</dbReference>
<dbReference type="InterPro" id="IPR045061">
    <property type="entry name" value="FtsZ/CetZ"/>
</dbReference>
<dbReference type="InterPro" id="IPR024757">
    <property type="entry name" value="FtsZ_C"/>
</dbReference>
<dbReference type="InterPro" id="IPR008280">
    <property type="entry name" value="Tub_FtsZ_C"/>
</dbReference>
<dbReference type="InterPro" id="IPR037103">
    <property type="entry name" value="Tubulin/FtsZ-like_C"/>
</dbReference>
<dbReference type="InterPro" id="IPR018316">
    <property type="entry name" value="Tubulin/FtsZ_2-layer-sand-dom"/>
</dbReference>
<dbReference type="InterPro" id="IPR036525">
    <property type="entry name" value="Tubulin/FtsZ_GTPase_sf"/>
</dbReference>
<dbReference type="InterPro" id="IPR003008">
    <property type="entry name" value="Tubulin_FtsZ_GTPase"/>
</dbReference>
<dbReference type="NCBIfam" id="TIGR00065">
    <property type="entry name" value="ftsZ"/>
    <property type="match status" value="1"/>
</dbReference>
<dbReference type="PANTHER" id="PTHR30314">
    <property type="entry name" value="CELL DIVISION PROTEIN FTSZ-RELATED"/>
    <property type="match status" value="1"/>
</dbReference>
<dbReference type="PANTHER" id="PTHR30314:SF3">
    <property type="entry name" value="MITOCHONDRIAL DIVISION PROTEIN FSZA"/>
    <property type="match status" value="1"/>
</dbReference>
<dbReference type="Pfam" id="PF12327">
    <property type="entry name" value="FtsZ_C"/>
    <property type="match status" value="1"/>
</dbReference>
<dbReference type="Pfam" id="PF00091">
    <property type="entry name" value="Tubulin"/>
    <property type="match status" value="1"/>
</dbReference>
<dbReference type="PRINTS" id="PR00423">
    <property type="entry name" value="CELLDVISFTSZ"/>
</dbReference>
<dbReference type="SMART" id="SM00864">
    <property type="entry name" value="Tubulin"/>
    <property type="match status" value="1"/>
</dbReference>
<dbReference type="SMART" id="SM00865">
    <property type="entry name" value="Tubulin_C"/>
    <property type="match status" value="1"/>
</dbReference>
<dbReference type="SUPFAM" id="SSF55307">
    <property type="entry name" value="Tubulin C-terminal domain-like"/>
    <property type="match status" value="1"/>
</dbReference>
<dbReference type="SUPFAM" id="SSF52490">
    <property type="entry name" value="Tubulin nucleotide-binding domain-like"/>
    <property type="match status" value="1"/>
</dbReference>
<dbReference type="PROSITE" id="PS01134">
    <property type="entry name" value="FTSZ_1"/>
    <property type="match status" value="1"/>
</dbReference>
<dbReference type="PROSITE" id="PS01135">
    <property type="entry name" value="FTSZ_2"/>
    <property type="match status" value="1"/>
</dbReference>
<gene>
    <name evidence="1" type="primary">ftsZ</name>
    <name type="ordered locus">Rv2150c</name>
    <name type="ORF">MTCY270.18</name>
</gene>
<proteinExistence type="evidence at protein level"/>